<evidence type="ECO:0000250" key="1">
    <source>
        <dbReference type="UniProtKB" id="Q7Y5A4"/>
    </source>
</evidence>
<evidence type="ECO:0000305" key="2"/>
<keyword id="KW-0945">Host-virus interaction</keyword>
<keyword id="KW-1090">Inhibition of host innate immune response by virus</keyword>
<keyword id="KW-1185">Reference proteome</keyword>
<keyword id="KW-0899">Viral immunoevasion</keyword>
<accession>P39229</accession>
<accession>Q9T0V7</accession>
<organism>
    <name type="scientific">Enterobacteria phage T4</name>
    <name type="common">Bacteriophage T4</name>
    <dbReference type="NCBI Taxonomy" id="10665"/>
    <lineage>
        <taxon>Viruses</taxon>
        <taxon>Duplodnaviria</taxon>
        <taxon>Heunggongvirae</taxon>
        <taxon>Uroviricota</taxon>
        <taxon>Caudoviricetes</taxon>
        <taxon>Straboviridae</taxon>
        <taxon>Tevenvirinae</taxon>
        <taxon>Tequatrovirus</taxon>
    </lineage>
</organism>
<organismHost>
    <name type="scientific">Escherichia coli</name>
    <dbReference type="NCBI Taxonomy" id="562"/>
</organismHost>
<dbReference type="EMBL" id="S57514">
    <property type="protein sequence ID" value="AAB25711.2"/>
    <property type="molecule type" value="Genomic_DNA"/>
</dbReference>
<dbReference type="EMBL" id="AF158101">
    <property type="protein sequence ID" value="AAD42509.1"/>
    <property type="molecule type" value="Genomic_DNA"/>
</dbReference>
<dbReference type="PIR" id="D45681">
    <property type="entry name" value="D45681"/>
</dbReference>
<dbReference type="RefSeq" id="NP_049650.1">
    <property type="nucleotide sequence ID" value="NC_000866.4"/>
</dbReference>
<dbReference type="GeneID" id="1258555"/>
<dbReference type="KEGG" id="vg:1258555"/>
<dbReference type="OrthoDB" id="9371at10239"/>
<dbReference type="Proteomes" id="UP000009087">
    <property type="component" value="Segment"/>
</dbReference>
<dbReference type="GO" id="GO:0052170">
    <property type="term" value="P:symbiont-mediated suppression of host innate immune response"/>
    <property type="evidence" value="ECO:0007669"/>
    <property type="project" value="UniProtKB-KW"/>
</dbReference>
<dbReference type="InterPro" id="IPR055608">
    <property type="entry name" value="AdfA-like"/>
</dbReference>
<dbReference type="Pfam" id="PF23813">
    <property type="entry name" value="AdfA"/>
    <property type="match status" value="1"/>
</dbReference>
<gene>
    <name type="primary">adfA</name>
    <name type="synonym">61.2</name>
    <name type="synonym">y01L</name>
</gene>
<name>ADFA_BPT4</name>
<comment type="function">
    <text evidence="1">Plays a role in counteracting the host DarT defense system.</text>
</comment>
<comment type="similarity">
    <text evidence="2">Belongs to the Anti-DarT factor A family.</text>
</comment>
<protein>
    <recommendedName>
        <fullName>Anti-DarT factor A</fullName>
    </recommendedName>
</protein>
<proteinExistence type="inferred from homology"/>
<sequence length="208" mass="24332">MLYQMHKCKDTYKYKGAQCYIINRENAGPGHSHQSRFVFVKNNEIIAVANYMLVTNDVNPVLFTYDNLMDLAYDYNWFNHDNLVHIEGVGFDISYSSYSLCPMSRAHKEPEYFSFRRRVDFKRSTEYVGGIFVKDNRITRIIYPLGFGQKDIDVDLDFTENIINHIASVYFDIDHKIVICGYELPSEKQPKVNVSIDDQIFNAFMNRG</sequence>
<reference key="1">
    <citation type="journal article" date="1993" name="J. Virol.">
        <title>Analysis of five presumptive protein-coding sequences clustered between the primosome genes, 41 and 61, of bacteriophages T4, T2, and T6.</title>
        <authorList>
            <person name="Selick H.E."/>
            <person name="Stormo G.D."/>
            <person name="Dyson R.L."/>
            <person name="Alberts B.M."/>
        </authorList>
    </citation>
    <scope>NUCLEOTIDE SEQUENCE [GENOMIC DNA]</scope>
</reference>
<reference key="2">
    <citation type="journal article" date="2003" name="Microbiol. Mol. Biol. Rev.">
        <title>Bacteriophage T4 genome.</title>
        <authorList>
            <person name="Miller E.S."/>
            <person name="Kutter E."/>
            <person name="Mosig G."/>
            <person name="Arisaka F."/>
            <person name="Kunisawa T."/>
            <person name="Ruger W."/>
        </authorList>
    </citation>
    <scope>NUCLEOTIDE SEQUENCE [LARGE SCALE GENOMIC DNA]</scope>
</reference>
<feature type="chain" id="PRO_0000165093" description="Anti-DarT factor A">
    <location>
        <begin position="1"/>
        <end position="208"/>
    </location>
</feature>
<feature type="sequence conflict" description="In Ref. 1; AAB25711." evidence="2" ref="1">
    <original>L</original>
    <variation>P</variation>
    <location>
        <position position="62"/>
    </location>
</feature>